<keyword id="KW-0004">4Fe-4S</keyword>
<keyword id="KW-0249">Electron transport</keyword>
<keyword id="KW-0408">Iron</keyword>
<keyword id="KW-0411">Iron-sulfur</keyword>
<keyword id="KW-0479">Metal-binding</keyword>
<keyword id="KW-0496">Mitochondrion</keyword>
<keyword id="KW-0520">NAD</keyword>
<keyword id="KW-0560">Oxidoreductase</keyword>
<keyword id="KW-1185">Reference proteome</keyword>
<keyword id="KW-0677">Repeat</keyword>
<keyword id="KW-0679">Respiratory chain</keyword>
<keyword id="KW-0809">Transit peptide</keyword>
<keyword id="KW-1278">Translocase</keyword>
<keyword id="KW-0813">Transport</keyword>
<keyword id="KW-0830">Ubiquinone</keyword>
<evidence type="ECO:0000250" key="1"/>
<evidence type="ECO:0000305" key="2"/>
<sequence length="230" mass="26354">MAAILARKSLSALRSRQLVLAGQAWQQGANTSNGTLLGTRTFATNDSFSTDKDDEEREQLAKELSKDWNSVFEQQINTLFLTEMVRGLMLTLKYFFEKKVTINYPFEKGPLSPRFRGEQPLRRYPTGEERCIACKLCEAICPAQAITIEAEAREDGSRRTTRYDIDMTKCIYCGFCQEACPVDAIVEGPNFEFATETHEELLYDKEKLLENGDRWETEIAENLRSESLYR</sequence>
<proteinExistence type="evidence at transcript level"/>
<name>NDUS8_TOBAC</name>
<dbReference type="EC" id="7.1.1.2"/>
<dbReference type="EMBL" id="Y09109">
    <property type="protein sequence ID" value="CAA70326.1"/>
    <property type="molecule type" value="mRNA"/>
</dbReference>
<dbReference type="RefSeq" id="NP_001312158.1">
    <property type="nucleotide sequence ID" value="NM_001325229.1"/>
</dbReference>
<dbReference type="SMR" id="O24143"/>
<dbReference type="STRING" id="4097.O24143"/>
<dbReference type="PaxDb" id="4097-O24143"/>
<dbReference type="GeneID" id="107776985"/>
<dbReference type="KEGG" id="nta:107776985"/>
<dbReference type="OrthoDB" id="1218075at2759"/>
<dbReference type="Proteomes" id="UP000084051">
    <property type="component" value="Unplaced"/>
</dbReference>
<dbReference type="GO" id="GO:0005739">
    <property type="term" value="C:mitochondrion"/>
    <property type="evidence" value="ECO:0007669"/>
    <property type="project" value="UniProtKB-SubCell"/>
</dbReference>
<dbReference type="GO" id="GO:0045271">
    <property type="term" value="C:respiratory chain complex I"/>
    <property type="evidence" value="ECO:0000318"/>
    <property type="project" value="GO_Central"/>
</dbReference>
<dbReference type="GO" id="GO:0051539">
    <property type="term" value="F:4 iron, 4 sulfur cluster binding"/>
    <property type="evidence" value="ECO:0007669"/>
    <property type="project" value="UniProtKB-KW"/>
</dbReference>
<dbReference type="GO" id="GO:0046872">
    <property type="term" value="F:metal ion binding"/>
    <property type="evidence" value="ECO:0007669"/>
    <property type="project" value="UniProtKB-KW"/>
</dbReference>
<dbReference type="GO" id="GO:0008137">
    <property type="term" value="F:NADH dehydrogenase (ubiquinone) activity"/>
    <property type="evidence" value="ECO:0007669"/>
    <property type="project" value="UniProtKB-EC"/>
</dbReference>
<dbReference type="GO" id="GO:0006120">
    <property type="term" value="P:mitochondrial electron transport, NADH to ubiquinone"/>
    <property type="evidence" value="ECO:0000318"/>
    <property type="project" value="GO_Central"/>
</dbReference>
<dbReference type="GO" id="GO:0032981">
    <property type="term" value="P:mitochondrial respiratory chain complex I assembly"/>
    <property type="evidence" value="ECO:0000318"/>
    <property type="project" value="GO_Central"/>
</dbReference>
<dbReference type="FunFam" id="3.30.70.3270:FF:000001">
    <property type="entry name" value="NADH-quinone oxidoreductase subunit I 1"/>
    <property type="match status" value="1"/>
</dbReference>
<dbReference type="Gene3D" id="3.30.70.3270">
    <property type="match status" value="1"/>
</dbReference>
<dbReference type="HAMAP" id="MF_01351">
    <property type="entry name" value="NDH1_NuoI"/>
    <property type="match status" value="1"/>
</dbReference>
<dbReference type="InterPro" id="IPR017896">
    <property type="entry name" value="4Fe4S_Fe-S-bd"/>
</dbReference>
<dbReference type="InterPro" id="IPR017900">
    <property type="entry name" value="4Fe4S_Fe_S_CS"/>
</dbReference>
<dbReference type="InterPro" id="IPR010226">
    <property type="entry name" value="NADH_quinone_OxRdtase_chainI"/>
</dbReference>
<dbReference type="NCBIfam" id="TIGR01971">
    <property type="entry name" value="NuoI"/>
    <property type="match status" value="1"/>
</dbReference>
<dbReference type="NCBIfam" id="NF004538">
    <property type="entry name" value="PRK05888.1-4"/>
    <property type="match status" value="1"/>
</dbReference>
<dbReference type="NCBIfam" id="NF004539">
    <property type="entry name" value="PRK05888.1-5"/>
    <property type="match status" value="1"/>
</dbReference>
<dbReference type="PANTHER" id="PTHR10849:SF20">
    <property type="entry name" value="NADH DEHYDROGENASE [UBIQUINONE] IRON-SULFUR PROTEIN 8, MITOCHONDRIAL"/>
    <property type="match status" value="1"/>
</dbReference>
<dbReference type="PANTHER" id="PTHR10849">
    <property type="entry name" value="NADH DEHYDROGENASE UBIQUINONE IRON-SULFUR PROTEIN 8, MITOCHONDRIAL"/>
    <property type="match status" value="1"/>
</dbReference>
<dbReference type="Pfam" id="PF12838">
    <property type="entry name" value="Fer4_7"/>
    <property type="match status" value="1"/>
</dbReference>
<dbReference type="SUPFAM" id="SSF54862">
    <property type="entry name" value="4Fe-4S ferredoxins"/>
    <property type="match status" value="1"/>
</dbReference>
<dbReference type="PROSITE" id="PS00198">
    <property type="entry name" value="4FE4S_FER_1"/>
    <property type="match status" value="2"/>
</dbReference>
<dbReference type="PROSITE" id="PS51379">
    <property type="entry name" value="4FE4S_FER_2"/>
    <property type="match status" value="2"/>
</dbReference>
<feature type="transit peptide" description="Mitochondrion" evidence="1">
    <location>
        <begin position="1"/>
        <end position="42"/>
    </location>
</feature>
<feature type="chain" id="PRO_0000020018" description="NADH dehydrogenase [ubiquinone] iron-sulfur protein 8, mitochondrial">
    <location>
        <begin position="43"/>
        <end position="230"/>
    </location>
</feature>
<feature type="domain" description="4Fe-4S ferredoxin-type 1">
    <location>
        <begin position="122"/>
        <end position="151"/>
    </location>
</feature>
<feature type="domain" description="4Fe-4S ferredoxin-type 2">
    <location>
        <begin position="161"/>
        <end position="190"/>
    </location>
</feature>
<feature type="binding site" evidence="1">
    <location>
        <position position="131"/>
    </location>
    <ligand>
        <name>[4Fe-4S] cluster</name>
        <dbReference type="ChEBI" id="CHEBI:49883"/>
        <label>1</label>
    </ligand>
</feature>
<feature type="binding site" evidence="1">
    <location>
        <position position="134"/>
    </location>
    <ligand>
        <name>[4Fe-4S] cluster</name>
        <dbReference type="ChEBI" id="CHEBI:49883"/>
        <label>1</label>
    </ligand>
</feature>
<feature type="binding site" evidence="1">
    <location>
        <position position="137"/>
    </location>
    <ligand>
        <name>[4Fe-4S] cluster</name>
        <dbReference type="ChEBI" id="CHEBI:49883"/>
        <label>1</label>
    </ligand>
</feature>
<feature type="binding site" evidence="1">
    <location>
        <position position="141"/>
    </location>
    <ligand>
        <name>[4Fe-4S] cluster</name>
        <dbReference type="ChEBI" id="CHEBI:49883"/>
        <label>2</label>
    </ligand>
</feature>
<feature type="binding site" evidence="1">
    <location>
        <position position="170"/>
    </location>
    <ligand>
        <name>[4Fe-4S] cluster</name>
        <dbReference type="ChEBI" id="CHEBI:49883"/>
        <label>2</label>
    </ligand>
</feature>
<feature type="binding site" evidence="1">
    <location>
        <position position="173"/>
    </location>
    <ligand>
        <name>[4Fe-4S] cluster</name>
        <dbReference type="ChEBI" id="CHEBI:49883"/>
        <label>2</label>
    </ligand>
</feature>
<feature type="binding site" evidence="1">
    <location>
        <position position="176"/>
    </location>
    <ligand>
        <name>[4Fe-4S] cluster</name>
        <dbReference type="ChEBI" id="CHEBI:49883"/>
        <label>2</label>
    </ligand>
</feature>
<feature type="binding site" evidence="1">
    <location>
        <position position="180"/>
    </location>
    <ligand>
        <name>[4Fe-4S] cluster</name>
        <dbReference type="ChEBI" id="CHEBI:49883"/>
        <label>1</label>
    </ligand>
</feature>
<organism>
    <name type="scientific">Nicotiana tabacum</name>
    <name type="common">Common tobacco</name>
    <dbReference type="NCBI Taxonomy" id="4097"/>
    <lineage>
        <taxon>Eukaryota</taxon>
        <taxon>Viridiplantae</taxon>
        <taxon>Streptophyta</taxon>
        <taxon>Embryophyta</taxon>
        <taxon>Tracheophyta</taxon>
        <taxon>Spermatophyta</taxon>
        <taxon>Magnoliopsida</taxon>
        <taxon>eudicotyledons</taxon>
        <taxon>Gunneridae</taxon>
        <taxon>Pentapetalae</taxon>
        <taxon>asterids</taxon>
        <taxon>lamiids</taxon>
        <taxon>Solanales</taxon>
        <taxon>Solanaceae</taxon>
        <taxon>Nicotianoideae</taxon>
        <taxon>Nicotianeae</taxon>
        <taxon>Nicotiana</taxon>
    </lineage>
</organism>
<accession>O24143</accession>
<reference key="1">
    <citation type="journal article" date="1997" name="Mol. Gen. Genet.">
        <title>The 28.5-kDa iron-sulfur protein of mitochondrial complex I is encoded in the nucleus in plants.</title>
        <authorList>
            <person name="Schmidt-Bleek K."/>
            <person name="Heiser V."/>
            <person name="Thieck O."/>
            <person name="Brennicke A."/>
            <person name="Grohmann L."/>
        </authorList>
    </citation>
    <scope>NUCLEOTIDE SEQUENCE [MRNA]</scope>
    <source>
        <strain>cv. Virginia</strain>
    </source>
</reference>
<comment type="function">
    <text evidence="1">Core subunit of the mitochondrial membrane respiratory chain NADH dehydrogenase (Complex I) that is believed to belong to the minimal assembly required for catalysis. Complex I functions in the transfer of electrons from NADH to the respiratory chain. The immediate electron acceptor for the enzyme is believed to be ubiquinone (By similarity). May donate electrons to ubiquinone.</text>
</comment>
<comment type="catalytic activity">
    <reaction>
        <text>a ubiquinone + NADH + 5 H(+)(in) = a ubiquinol + NAD(+) + 4 H(+)(out)</text>
        <dbReference type="Rhea" id="RHEA:29091"/>
        <dbReference type="Rhea" id="RHEA-COMP:9565"/>
        <dbReference type="Rhea" id="RHEA-COMP:9566"/>
        <dbReference type="ChEBI" id="CHEBI:15378"/>
        <dbReference type="ChEBI" id="CHEBI:16389"/>
        <dbReference type="ChEBI" id="CHEBI:17976"/>
        <dbReference type="ChEBI" id="CHEBI:57540"/>
        <dbReference type="ChEBI" id="CHEBI:57945"/>
        <dbReference type="EC" id="7.1.1.2"/>
    </reaction>
</comment>
<comment type="cofactor">
    <cofactor evidence="1">
        <name>[4Fe-4S] cluster</name>
        <dbReference type="ChEBI" id="CHEBI:49883"/>
    </cofactor>
    <text evidence="1">Binds 2 [4Fe-4S] clusters per subunit.</text>
</comment>
<comment type="subunit">
    <text evidence="1">Complex I is composed of about 45 different subunits. This is a component of the iron-sulfur (IP) fragment of the enzyme (By similarity).</text>
</comment>
<comment type="subcellular location">
    <subcellularLocation>
        <location evidence="2">Mitochondrion</location>
    </subcellularLocation>
</comment>
<comment type="similarity">
    <text evidence="2">Belongs to the complex I 23 kDa subunit family.</text>
</comment>
<protein>
    <recommendedName>
        <fullName>NADH dehydrogenase [ubiquinone] iron-sulfur protein 8, mitochondrial</fullName>
        <ecNumber>7.1.1.2</ecNumber>
    </recommendedName>
</protein>